<name>RIMK_XANC8</name>
<organism>
    <name type="scientific">Xanthomonas campestris pv. campestris (strain 8004)</name>
    <dbReference type="NCBI Taxonomy" id="314565"/>
    <lineage>
        <taxon>Bacteria</taxon>
        <taxon>Pseudomonadati</taxon>
        <taxon>Pseudomonadota</taxon>
        <taxon>Gammaproteobacteria</taxon>
        <taxon>Lysobacterales</taxon>
        <taxon>Lysobacteraceae</taxon>
        <taxon>Xanthomonas</taxon>
    </lineage>
</organism>
<feature type="chain" id="PRO_0000205494" description="Probable alpha-L-glutamate ligase">
    <location>
        <begin position="1"/>
        <end position="291"/>
    </location>
</feature>
<feature type="domain" description="ATP-grasp" evidence="1">
    <location>
        <begin position="104"/>
        <end position="287"/>
    </location>
</feature>
<feature type="binding site" evidence="1">
    <location>
        <position position="141"/>
    </location>
    <ligand>
        <name>ATP</name>
        <dbReference type="ChEBI" id="CHEBI:30616"/>
    </ligand>
</feature>
<feature type="binding site" evidence="1">
    <location>
        <begin position="178"/>
        <end position="179"/>
    </location>
    <ligand>
        <name>ATP</name>
        <dbReference type="ChEBI" id="CHEBI:30616"/>
    </ligand>
</feature>
<feature type="binding site" evidence="1">
    <location>
        <position position="187"/>
    </location>
    <ligand>
        <name>ATP</name>
        <dbReference type="ChEBI" id="CHEBI:30616"/>
    </ligand>
</feature>
<feature type="binding site" evidence="1">
    <location>
        <begin position="211"/>
        <end position="213"/>
    </location>
    <ligand>
        <name>ATP</name>
        <dbReference type="ChEBI" id="CHEBI:30616"/>
    </ligand>
</feature>
<feature type="binding site" evidence="1">
    <location>
        <position position="248"/>
    </location>
    <ligand>
        <name>Mg(2+)</name>
        <dbReference type="ChEBI" id="CHEBI:18420"/>
        <label>1</label>
    </ligand>
</feature>
<feature type="binding site" evidence="1">
    <location>
        <position position="248"/>
    </location>
    <ligand>
        <name>Mn(2+)</name>
        <dbReference type="ChEBI" id="CHEBI:29035"/>
        <label>1</label>
    </ligand>
</feature>
<feature type="binding site" evidence="1">
    <location>
        <position position="260"/>
    </location>
    <ligand>
        <name>Mg(2+)</name>
        <dbReference type="ChEBI" id="CHEBI:18420"/>
        <label>1</label>
    </ligand>
</feature>
<feature type="binding site" evidence="1">
    <location>
        <position position="260"/>
    </location>
    <ligand>
        <name>Mg(2+)</name>
        <dbReference type="ChEBI" id="CHEBI:18420"/>
        <label>2</label>
    </ligand>
</feature>
<feature type="binding site" evidence="1">
    <location>
        <position position="260"/>
    </location>
    <ligand>
        <name>Mn(2+)</name>
        <dbReference type="ChEBI" id="CHEBI:29035"/>
        <label>1</label>
    </ligand>
</feature>
<feature type="binding site" evidence="1">
    <location>
        <position position="260"/>
    </location>
    <ligand>
        <name>Mn(2+)</name>
        <dbReference type="ChEBI" id="CHEBI:29035"/>
        <label>2</label>
    </ligand>
</feature>
<feature type="binding site" evidence="1">
    <location>
        <position position="262"/>
    </location>
    <ligand>
        <name>Mg(2+)</name>
        <dbReference type="ChEBI" id="CHEBI:18420"/>
        <label>2</label>
    </ligand>
</feature>
<feature type="binding site" evidence="1">
    <location>
        <position position="262"/>
    </location>
    <ligand>
        <name>Mn(2+)</name>
        <dbReference type="ChEBI" id="CHEBI:29035"/>
        <label>2</label>
    </ligand>
</feature>
<dbReference type="EC" id="6.3.2.-" evidence="1"/>
<dbReference type="EMBL" id="CP000050">
    <property type="protein sequence ID" value="AAY48118.1"/>
    <property type="molecule type" value="Genomic_DNA"/>
</dbReference>
<dbReference type="RefSeq" id="WP_011038222.1">
    <property type="nucleotide sequence ID" value="NZ_CP155948.1"/>
</dbReference>
<dbReference type="SMR" id="Q4UXV5"/>
<dbReference type="KEGG" id="xcb:XC_1048"/>
<dbReference type="HOGENOM" id="CLU_054353_0_1_6"/>
<dbReference type="Proteomes" id="UP000000420">
    <property type="component" value="Chromosome"/>
</dbReference>
<dbReference type="GO" id="GO:0005737">
    <property type="term" value="C:cytoplasm"/>
    <property type="evidence" value="ECO:0007669"/>
    <property type="project" value="TreeGrafter"/>
</dbReference>
<dbReference type="GO" id="GO:0005524">
    <property type="term" value="F:ATP binding"/>
    <property type="evidence" value="ECO:0007669"/>
    <property type="project" value="UniProtKB-UniRule"/>
</dbReference>
<dbReference type="GO" id="GO:0046872">
    <property type="term" value="F:metal ion binding"/>
    <property type="evidence" value="ECO:0007669"/>
    <property type="project" value="UniProtKB-KW"/>
</dbReference>
<dbReference type="GO" id="GO:0018169">
    <property type="term" value="F:ribosomal S6-glutamic acid ligase activity"/>
    <property type="evidence" value="ECO:0007669"/>
    <property type="project" value="TreeGrafter"/>
</dbReference>
<dbReference type="GO" id="GO:0036211">
    <property type="term" value="P:protein modification process"/>
    <property type="evidence" value="ECO:0007669"/>
    <property type="project" value="InterPro"/>
</dbReference>
<dbReference type="GO" id="GO:0009432">
    <property type="term" value="P:SOS response"/>
    <property type="evidence" value="ECO:0007669"/>
    <property type="project" value="TreeGrafter"/>
</dbReference>
<dbReference type="GO" id="GO:0006412">
    <property type="term" value="P:translation"/>
    <property type="evidence" value="ECO:0007669"/>
    <property type="project" value="UniProtKB-KW"/>
</dbReference>
<dbReference type="FunFam" id="3.40.50.20:FF:000004">
    <property type="entry name" value="Probable alpha-L-glutamate ligase"/>
    <property type="match status" value="1"/>
</dbReference>
<dbReference type="FunFam" id="3.30.1490.20:FF:000005">
    <property type="entry name" value="Probable alpha-L-glutamate ligase 1"/>
    <property type="match status" value="1"/>
</dbReference>
<dbReference type="Gene3D" id="3.40.50.20">
    <property type="match status" value="1"/>
</dbReference>
<dbReference type="Gene3D" id="3.30.1490.20">
    <property type="entry name" value="ATP-grasp fold, A domain"/>
    <property type="match status" value="1"/>
</dbReference>
<dbReference type="Gene3D" id="3.30.470.20">
    <property type="entry name" value="ATP-grasp fold, B domain"/>
    <property type="match status" value="1"/>
</dbReference>
<dbReference type="HAMAP" id="MF_01552">
    <property type="entry name" value="RimK"/>
    <property type="match status" value="1"/>
</dbReference>
<dbReference type="InterPro" id="IPR011761">
    <property type="entry name" value="ATP-grasp"/>
</dbReference>
<dbReference type="InterPro" id="IPR013651">
    <property type="entry name" value="ATP-grasp_RimK-type"/>
</dbReference>
<dbReference type="InterPro" id="IPR013815">
    <property type="entry name" value="ATP_grasp_subdomain_1"/>
</dbReference>
<dbReference type="InterPro" id="IPR023533">
    <property type="entry name" value="RimK"/>
</dbReference>
<dbReference type="InterPro" id="IPR041107">
    <property type="entry name" value="Rimk_N"/>
</dbReference>
<dbReference type="InterPro" id="IPR004666">
    <property type="entry name" value="Rp_bS6_RimK/Lys_biosynth_LsyX"/>
</dbReference>
<dbReference type="NCBIfam" id="NF007764">
    <property type="entry name" value="PRK10446.1"/>
    <property type="match status" value="1"/>
</dbReference>
<dbReference type="NCBIfam" id="TIGR00768">
    <property type="entry name" value="rimK_fam"/>
    <property type="match status" value="1"/>
</dbReference>
<dbReference type="PANTHER" id="PTHR21621:SF7">
    <property type="entry name" value="RIBOSOMAL PROTEIN BS6--L-GLUTAMATE LIGASE"/>
    <property type="match status" value="1"/>
</dbReference>
<dbReference type="PANTHER" id="PTHR21621">
    <property type="entry name" value="RIBOSOMAL PROTEIN S6 MODIFICATION PROTEIN"/>
    <property type="match status" value="1"/>
</dbReference>
<dbReference type="Pfam" id="PF08443">
    <property type="entry name" value="RimK"/>
    <property type="match status" value="1"/>
</dbReference>
<dbReference type="Pfam" id="PF18030">
    <property type="entry name" value="Rimk_N"/>
    <property type="match status" value="1"/>
</dbReference>
<dbReference type="SUPFAM" id="SSF56059">
    <property type="entry name" value="Glutathione synthetase ATP-binding domain-like"/>
    <property type="match status" value="1"/>
</dbReference>
<dbReference type="PROSITE" id="PS50975">
    <property type="entry name" value="ATP_GRASP"/>
    <property type="match status" value="1"/>
</dbReference>
<proteinExistence type="inferred from homology"/>
<comment type="cofactor">
    <cofactor evidence="1">
        <name>Mg(2+)</name>
        <dbReference type="ChEBI" id="CHEBI:18420"/>
    </cofactor>
    <cofactor evidence="1">
        <name>Mn(2+)</name>
        <dbReference type="ChEBI" id="CHEBI:29035"/>
    </cofactor>
    <text evidence="1">Binds 2 magnesium or manganese ions per subunit.</text>
</comment>
<comment type="similarity">
    <text evidence="1">Belongs to the RimK family.</text>
</comment>
<protein>
    <recommendedName>
        <fullName evidence="1">Probable alpha-L-glutamate ligase</fullName>
        <ecNumber evidence="1">6.3.2.-</ecNumber>
    </recommendedName>
</protein>
<sequence length="291" mass="31195">MKIAILSRNSKLYSTRRLIEAGRTRGHTVRILDPLRCYMRIAADGFSLHYKGKPITGFDAVIPRIGASVTRYGTAVLRQLEFMGTYTPNPSDAILRSRDKLRAHQLLASQGIDMPVTVFGDNPDDTQDLLSMLGPPPHVVKLNEGAQGAGVILTEKASASRGVVEALRGLYANFIVQEFIGEAEGADLRCFVVGDRVVAAMRRQAADGDFRSNLHLGGTAAMAEASPQEQDVAVRSARALGLAVAGVDLIRSQRGPLVLEVNSTPGLEGVEGVCGVDVAGTIIQHLEQAIR</sequence>
<gene>
    <name evidence="1" type="primary">rimK</name>
    <name type="ordered locus">XC_1048</name>
</gene>
<reference key="1">
    <citation type="journal article" date="2005" name="Genome Res.">
        <title>Comparative and functional genomic analyses of the pathogenicity of phytopathogen Xanthomonas campestris pv. campestris.</title>
        <authorList>
            <person name="Qian W."/>
            <person name="Jia Y."/>
            <person name="Ren S.-X."/>
            <person name="He Y.-Q."/>
            <person name="Feng J.-X."/>
            <person name="Lu L.-F."/>
            <person name="Sun Q."/>
            <person name="Ying G."/>
            <person name="Tang D.-J."/>
            <person name="Tang H."/>
            <person name="Wu W."/>
            <person name="Hao P."/>
            <person name="Wang L."/>
            <person name="Jiang B.-L."/>
            <person name="Zeng S."/>
            <person name="Gu W.-Y."/>
            <person name="Lu G."/>
            <person name="Rong L."/>
            <person name="Tian Y."/>
            <person name="Yao Z."/>
            <person name="Fu G."/>
            <person name="Chen B."/>
            <person name="Fang R."/>
            <person name="Qiang B."/>
            <person name="Chen Z."/>
            <person name="Zhao G.-P."/>
            <person name="Tang J.-L."/>
            <person name="He C."/>
        </authorList>
    </citation>
    <scope>NUCLEOTIDE SEQUENCE [LARGE SCALE GENOMIC DNA]</scope>
    <source>
        <strain>8004</strain>
    </source>
</reference>
<keyword id="KW-0067">ATP-binding</keyword>
<keyword id="KW-0436">Ligase</keyword>
<keyword id="KW-0460">Magnesium</keyword>
<keyword id="KW-0464">Manganese</keyword>
<keyword id="KW-0479">Metal-binding</keyword>
<keyword id="KW-0547">Nucleotide-binding</keyword>
<keyword id="KW-0648">Protein biosynthesis</keyword>
<accession>Q4UXV5</accession>
<evidence type="ECO:0000255" key="1">
    <source>
        <dbReference type="HAMAP-Rule" id="MF_01552"/>
    </source>
</evidence>